<comment type="function">
    <text evidence="1 3 7 10 11 12 15">Signaling molecule that serves as a cell density signal for both genetic competence development and sporulation (PubMed:8769645, PubMed:9200610). Secreted during production, but the mature peptide acts intracellularly, indicating that it needs to be imported into the cell to function (PubMed:8769645, PubMed:9200610). At low concentrations, CSF stimulates expression of the genes controlled by ComA, a transcriptional factor that regulates the development of genetic competence (PubMed:10464187, PubMed:8769645, PubMed:9200610). It includes the srfA operon, which encodes a small protein, ComS, required for competence development, and the surfactin biosynthetic enzymes (PubMed:10464187, PubMed:8769645, PubMed:9200610). Acts by inhibiting RapC, which regulates the activity of ComA (PubMed:12950917, PubMed:8769645). At high concentrations, it inhibits expression of those same ComA-controlled genes, maybe by inhibiting activity of the kinase ComP (PubMed:10464187, PubMed:8769645, PubMed:9200610). In addition, high concentrations of CSF can stimulate sporulation under some conditions (PubMed:8769645, PubMed:9200610). Also inhibits RapB activity, with lower efficiency, but does not act on RapA (PubMed:9238025). Is probably involved in the quorum sensing control of sporulation (Probable). CSF is a species-specific signaling molecule that partially compensates for the lack of ComX-mediated communication between different strains of B.subtilis (PubMed:18375560).</text>
</comment>
<comment type="function">
    <text evidence="6 14">B.subtilis is a well-characterized soil and water saprophyte, but it is also found in enteric flora of many species, including humans (Probable). In this environment, CSF can be transported into human intestinal epithelia via OCTN2, a host cell membrane transporter, and can induce cytoprotective heat shock proteins contributing to intestinal homeostasis (PubMed:18005709).</text>
</comment>
<comment type="function">
    <text evidence="9">In addition, in non-domesticated swarming strains of B.subtilis, the residual propeptide exposed on the exterior of the cytoplasmic membrane may have an extracellular role in swarming (PubMed:19202088). This function is probably not dependent on CSF (PubMed:19202088).</text>
</comment>
<comment type="subunit">
    <text evidence="3">Interacts with RapC and inhibits its interaction with ComA.</text>
</comment>
<comment type="interaction">
    <interactant intactId="EBI-16042798">
        <id>P94416</id>
    </interactant>
    <interactant intactId="EBI-5246213">
        <id>O34327</id>
        <label>rapJ</label>
    </interactant>
    <organismsDiffer>false</organismsDiffer>
    <experiments>4</experiments>
</comment>
<comment type="subcellular location">
    <subcellularLocation>
        <location evidence="10 11">Secreted</location>
    </subcellularLocation>
    <subcellularLocation>
        <location evidence="10 11">Cytoplasm</location>
    </subcellularLocation>
    <subcellularLocation>
        <location evidence="6">Host cell</location>
    </subcellularLocation>
    <text evidence="6 10 11">Produced through an export-import maturation process (PubMed:8769645, PubMed:9200610). Peptides are secreted by the bacterium, and are then actively transported into the cell where they interact with intracellular receptors to regulate gene expression (PubMed:8769645, PubMed:9200610). Transported into the cell by the Opp (Spo0K) oligopeptide permease (PubMed:8769645, PubMed:9200610). In human gut, is transported into the intestinal epithelia by OCTN2 (PubMed:18005709).</text>
</comment>
<comment type="developmental stage">
    <text evidence="1">By mid-exponential phase, CSF accumulates to concentrations that stimulate ComA-dependent gene expression (PubMed:10464187). Upon entry into stationary phase, CSF reaches high concentrations that stimulate sporulation and inhibit ComA-dependent gene expression (PubMed:10464187).</text>
</comment>
<comment type="induction">
    <text evidence="1">Part of the rapC-phrC operon, which is controlled by the P1 promoter (PubMed:10464187). Transcription from the P1 promoter is activated by high cell density through the phosphorylated form of ComA (PubMed:10464187). PhrC is part of an autoregulatory loop, and it positively regulates its own expression (PubMed:10464187). In addition, transcription of phrC is also regulated by a P2 promoter, which directs transcription of phrC only and is controlled by the sigma-H factor (PubMed:10464187).</text>
</comment>
<comment type="PTM">
    <text evidence="5 8 16">Secreted with a propeptide domain, which is cleaved in the cell wall by the secreted serine proteases subtilisin, Epr and Vpr to produce a mature signaling peptide (PubMed:17666034, PubMed:18689487). Contains a predicted signal peptide cleavage site in the N-terminal region, however the propeptide is probably subject to only one processing event, at the N-terminal end of the mature peptide (Probable).</text>
</comment>
<comment type="disruption phenotype">
    <text evidence="4 9 10">Null mutant produces no detectable CSF activity, but null mutation has modest effects on competence gene expression (PubMed:8769645). Deletion of the gene results in decreased expression of genes activated by ComA, and significantly changes the expression of 66 operons (PubMed:16816200). In non-domesticated strains, the mutant is blocked early in swarming, forming stunted dendrites, with abnormal dendrite initiation morphology (PubMed:19202088). Mutant exhibits a specific migration defect that cannot be trans-complemented by CSF in a mixed swarm (PubMed:19202088).</text>
</comment>
<comment type="miscellaneous">
    <text evidence="4">CSF, PhrF and PhrK stimulate ComA-dependent gene expression to different levels and are all required for full expression of genes activated by ComA.</text>
</comment>
<comment type="similarity">
    <text evidence="14">Belongs to the Phr family.</text>
</comment>
<organism>
    <name type="scientific">Bacillus subtilis (strain 168)</name>
    <dbReference type="NCBI Taxonomy" id="224308"/>
    <lineage>
        <taxon>Bacteria</taxon>
        <taxon>Bacillati</taxon>
        <taxon>Bacillota</taxon>
        <taxon>Bacilli</taxon>
        <taxon>Bacillales</taxon>
        <taxon>Bacillaceae</taxon>
        <taxon>Bacillus</taxon>
    </lineage>
</organism>
<name>PHRC_BACSU</name>
<accession>P94416</accession>
<feature type="propeptide" id="PRO_0000456997" evidence="16">
    <location>
        <begin position="1"/>
        <end position="35"/>
    </location>
</feature>
<feature type="peptide" id="PRO_0000161729" description="Competence and sporulation stimulating factor" evidence="5 8 10 16">
    <location>
        <begin position="36"/>
        <end position="40"/>
    </location>
</feature>
<feature type="site" description="Cleavage; by serine proteases" evidence="5 8 16">
    <location>
        <begin position="35"/>
        <end position="36"/>
    </location>
</feature>
<feature type="mutagenesis site" description="40% decrease in CSF production." evidence="8">
    <original>D</original>
    <variation>A</variation>
    <location>
        <position position="31"/>
    </location>
</feature>
<feature type="mutagenesis site" description="95% decrease in CSF production. 98% reduction in cleavage of pro-CSF by subtilisin and 90% reduction in cleavage by Vpr." evidence="8">
    <original>F</original>
    <variation>K</variation>
    <location>
        <position position="32"/>
    </location>
</feature>
<feature type="mutagenesis site" description="Increases levels of CSF production." evidence="8">
    <original>F</original>
    <variation>M</variation>
    <variation>V</variation>
    <location>
        <position position="32"/>
    </location>
</feature>
<feature type="mutagenesis site" description="65% decrease in CSF production. 47% reduction in cleavage of pro-CSF by subtilisin and 79% reduction in cleavage by Vpr." evidence="8">
    <original>H</original>
    <variation>A</variation>
    <location>
        <position position="33"/>
    </location>
</feature>
<feature type="mutagenesis site" description="50% decrease in CSF production. 97% reduction in cleavage of pro-CSF by subtilisin and 42% reduction in cleavage by Vpr." evidence="8">
    <original>V</original>
    <variation>E</variation>
    <location>
        <position position="34"/>
    </location>
</feature>
<feature type="mutagenesis site" description="Slightly increases transcription of the ComA-controlled gene rapA. No change in CSF levels." evidence="2 8">
    <original>T</original>
    <variation>A</variation>
    <location>
        <position position="35"/>
    </location>
</feature>
<feature type="mutagenesis site" description="35% decrease in CSF production." evidence="8">
    <original>T</original>
    <variation>K</variation>
    <location>
        <position position="35"/>
    </location>
</feature>
<feature type="mutagenesis site" description="Decreases transcription of the ComA-controlled gene rapA." evidence="2">
    <original>T</original>
    <variation>P</variation>
    <location>
        <position position="35"/>
    </location>
</feature>
<feature type="mutagenesis site" description="Does not stimulate expression of the srfA operon. No change in inhibitory activity. Strong decrease in sporulation stimulation. Loss of activity toward RapB. Does not acquire any ability to inhibit RapA." evidence="11 12">
    <original>E</original>
    <variation>A</variation>
    <location>
        <position position="36"/>
    </location>
</feature>
<feature type="mutagenesis site" description="Does not stimulate expression of the srfA operon. Loss of inhibitory activity. Strong decrease in sporulation stimulation." evidence="11">
    <original>R</original>
    <variation>A</variation>
    <location>
        <position position="37"/>
    </location>
</feature>
<feature type="mutagenesis site" description="Does not stimulate expression of the srfA operon. No change in inhibitory activity and in sporulation stimulation." evidence="11">
    <original>G</original>
    <variation>A</variation>
    <location>
        <position position="38"/>
    </location>
</feature>
<feature type="mutagenesis site" description="Increases activity toward RapB. Does not acquire any ability to inhibit RapA." evidence="12">
    <original>G</original>
    <variation>N</variation>
    <location>
        <position position="38"/>
    </location>
</feature>
<feature type="mutagenesis site" description="Does not stimulate expression of the srfA operon. Loss of inhibitory activity. Strong decrease in sporulation stimulation." evidence="11">
    <original>M</original>
    <variation>A</variation>
    <location>
        <position position="39"/>
    </location>
</feature>
<feature type="mutagenesis site" description="Loss of activity toward RapB. Does not acquire any ability to inhibit RapA." evidence="12">
    <original>M</original>
    <variation>Q</variation>
    <location>
        <position position="39"/>
    </location>
</feature>
<feature type="mutagenesis site" description="Does not stimulate expression of the srfA operon. Reduced inhibitory activity. Strong decrease in sporulation stimulation." evidence="11">
    <original>T</original>
    <variation>A</variation>
    <location>
        <position position="40"/>
    </location>
</feature>
<keyword id="KW-0178">Competence</keyword>
<keyword id="KW-0963">Cytoplasm</keyword>
<keyword id="KW-0903">Direct protein sequencing</keyword>
<keyword id="KW-0673">Quorum sensing</keyword>
<keyword id="KW-1185">Reference proteome</keyword>
<keyword id="KW-0964">Secreted</keyword>
<keyword id="KW-0749">Sporulation</keyword>
<proteinExistence type="evidence at protein level"/>
<reference key="1">
    <citation type="journal article" date="1996" name="Microbiology">
        <title>The 25 degrees-36 degrees region of the Bacillus subtilis chromosome: determination of the sequence of a 146 kb segment and identification of 113 genes.</title>
        <authorList>
            <person name="Yamane K."/>
            <person name="Kumano M."/>
            <person name="Kurita K."/>
        </authorList>
    </citation>
    <scope>NUCLEOTIDE SEQUENCE [GENOMIC DNA]</scope>
    <source>
        <strain>168</strain>
    </source>
</reference>
<reference key="2">
    <citation type="journal article" date="1997" name="Nature">
        <title>The complete genome sequence of the Gram-positive bacterium Bacillus subtilis.</title>
        <authorList>
            <person name="Kunst F."/>
            <person name="Ogasawara N."/>
            <person name="Moszer I."/>
            <person name="Albertini A.M."/>
            <person name="Alloni G."/>
            <person name="Azevedo V."/>
            <person name="Bertero M.G."/>
            <person name="Bessieres P."/>
            <person name="Bolotin A."/>
            <person name="Borchert S."/>
            <person name="Borriss R."/>
            <person name="Boursier L."/>
            <person name="Brans A."/>
            <person name="Braun M."/>
            <person name="Brignell S.C."/>
            <person name="Bron S."/>
            <person name="Brouillet S."/>
            <person name="Bruschi C.V."/>
            <person name="Caldwell B."/>
            <person name="Capuano V."/>
            <person name="Carter N.M."/>
            <person name="Choi S.-K."/>
            <person name="Codani J.-J."/>
            <person name="Connerton I.F."/>
            <person name="Cummings N.J."/>
            <person name="Daniel R.A."/>
            <person name="Denizot F."/>
            <person name="Devine K.M."/>
            <person name="Duesterhoeft A."/>
            <person name="Ehrlich S.D."/>
            <person name="Emmerson P.T."/>
            <person name="Entian K.-D."/>
            <person name="Errington J."/>
            <person name="Fabret C."/>
            <person name="Ferrari E."/>
            <person name="Foulger D."/>
            <person name="Fritz C."/>
            <person name="Fujita M."/>
            <person name="Fujita Y."/>
            <person name="Fuma S."/>
            <person name="Galizzi A."/>
            <person name="Galleron N."/>
            <person name="Ghim S.-Y."/>
            <person name="Glaser P."/>
            <person name="Goffeau A."/>
            <person name="Golightly E.J."/>
            <person name="Grandi G."/>
            <person name="Guiseppi G."/>
            <person name="Guy B.J."/>
            <person name="Haga K."/>
            <person name="Haiech J."/>
            <person name="Harwood C.R."/>
            <person name="Henaut A."/>
            <person name="Hilbert H."/>
            <person name="Holsappel S."/>
            <person name="Hosono S."/>
            <person name="Hullo M.-F."/>
            <person name="Itaya M."/>
            <person name="Jones L.-M."/>
            <person name="Joris B."/>
            <person name="Karamata D."/>
            <person name="Kasahara Y."/>
            <person name="Klaerr-Blanchard M."/>
            <person name="Klein C."/>
            <person name="Kobayashi Y."/>
            <person name="Koetter P."/>
            <person name="Koningstein G."/>
            <person name="Krogh S."/>
            <person name="Kumano M."/>
            <person name="Kurita K."/>
            <person name="Lapidus A."/>
            <person name="Lardinois S."/>
            <person name="Lauber J."/>
            <person name="Lazarevic V."/>
            <person name="Lee S.-M."/>
            <person name="Levine A."/>
            <person name="Liu H."/>
            <person name="Masuda S."/>
            <person name="Mauel C."/>
            <person name="Medigue C."/>
            <person name="Medina N."/>
            <person name="Mellado R.P."/>
            <person name="Mizuno M."/>
            <person name="Moestl D."/>
            <person name="Nakai S."/>
            <person name="Noback M."/>
            <person name="Noone D."/>
            <person name="O'Reilly M."/>
            <person name="Ogawa K."/>
            <person name="Ogiwara A."/>
            <person name="Oudega B."/>
            <person name="Park S.-H."/>
            <person name="Parro V."/>
            <person name="Pohl T.M."/>
            <person name="Portetelle D."/>
            <person name="Porwollik S."/>
            <person name="Prescott A.M."/>
            <person name="Presecan E."/>
            <person name="Pujic P."/>
            <person name="Purnelle B."/>
            <person name="Rapoport G."/>
            <person name="Rey M."/>
            <person name="Reynolds S."/>
            <person name="Rieger M."/>
            <person name="Rivolta C."/>
            <person name="Rocha E."/>
            <person name="Roche B."/>
            <person name="Rose M."/>
            <person name="Sadaie Y."/>
            <person name="Sato T."/>
            <person name="Scanlan E."/>
            <person name="Schleich S."/>
            <person name="Schroeter R."/>
            <person name="Scoffone F."/>
            <person name="Sekiguchi J."/>
            <person name="Sekowska A."/>
            <person name="Seror S.J."/>
            <person name="Serror P."/>
            <person name="Shin B.-S."/>
            <person name="Soldo B."/>
            <person name="Sorokin A."/>
            <person name="Tacconi E."/>
            <person name="Takagi T."/>
            <person name="Takahashi H."/>
            <person name="Takemaru K."/>
            <person name="Takeuchi M."/>
            <person name="Tamakoshi A."/>
            <person name="Tanaka T."/>
            <person name="Terpstra P."/>
            <person name="Tognoni A."/>
            <person name="Tosato V."/>
            <person name="Uchiyama S."/>
            <person name="Vandenbol M."/>
            <person name="Vannier F."/>
            <person name="Vassarotti A."/>
            <person name="Viari A."/>
            <person name="Wambutt R."/>
            <person name="Wedler E."/>
            <person name="Wedler H."/>
            <person name="Weitzenegger T."/>
            <person name="Winters P."/>
            <person name="Wipat A."/>
            <person name="Yamamoto H."/>
            <person name="Yamane K."/>
            <person name="Yasumoto K."/>
            <person name="Yata K."/>
            <person name="Yoshida K."/>
            <person name="Yoshikawa H.-F."/>
            <person name="Zumstein E."/>
            <person name="Yoshikawa H."/>
            <person name="Danchin A."/>
        </authorList>
    </citation>
    <scope>NUCLEOTIDE SEQUENCE [LARGE SCALE GENOMIC DNA]</scope>
    <source>
        <strain>168</strain>
    </source>
</reference>
<reference key="3">
    <citation type="journal article" date="1996" name="Genes Dev.">
        <title>Purification and characterization of an extracellular peptide factor that affects two different developmental pathways in Bacillus subtilis.</title>
        <authorList>
            <person name="Solomon J.M."/>
            <person name="Lazazzera B.A."/>
            <person name="Grossman A.D."/>
        </authorList>
    </citation>
    <scope>PROTEIN SEQUENCE OF 36-40</scope>
    <scope>IDENTIFICATION BY MASS SPECTROMETRY</scope>
    <scope>FUNCTION</scope>
    <scope>SUBCELLULAR LOCATION</scope>
    <scope>DISRUPTION PHENOTYPE</scope>
    <source>
        <strain>168 / JH642</strain>
    </source>
</reference>
<reference key="4">
    <citation type="journal article" date="1997" name="Cell">
        <title>An exported peptide functions intracellularly to contribute to cell density signaling in B. subtilis.</title>
        <authorList>
            <person name="Lazazzera B.A."/>
            <person name="Solomon J.M."/>
            <person name="Grossman A.D."/>
        </authorList>
    </citation>
    <scope>FUNCTION</scope>
    <scope>SUBCELLULAR LOCATION</scope>
    <scope>MUTAGENESIS OF GLU-36; ARG-37; GLY-38; MET-39 AND THR-40</scope>
    <source>
        <strain>168 / JH642</strain>
    </source>
</reference>
<reference key="5">
    <citation type="journal article" date="1997" name="Proc. Natl. Acad. Sci. U.S.A.">
        <title>A peptide export-import control circuit modulating bacterial development regulates protein phosphatases of the phosphorelay.</title>
        <authorList>
            <person name="Perego M."/>
        </authorList>
    </citation>
    <scope>FUNCTION</scope>
    <scope>MUTAGENESIS OF GLU-36; GLY-38 AND MET-39</scope>
    <source>
        <strain>168 / JH642</strain>
    </source>
</reference>
<reference key="6">
    <citation type="journal article" date="1999" name="J. Bacteriol.">
        <title>An autoregulatory circuit affecting peptide signaling in Bacillus subtilis.</title>
        <authorList>
            <person name="Lazazzera B.A."/>
            <person name="Kurtser I.G."/>
            <person name="McQuade R.S."/>
            <person name="Grossman A.D."/>
        </authorList>
    </citation>
    <scope>FUNCTION</scope>
    <scope>DEVELOPMENTAL STAGE</scope>
    <scope>TRANSCRIPTIONAL REGULATION</scope>
    <source>
        <strain>168 / JH642</strain>
    </source>
</reference>
<reference key="7">
    <citation type="journal article" date="2003" name="Front. Biosci.">
        <title>The extracellular Phr peptide-Rap phosphatase signaling circuit of Bacillus subtilis.</title>
        <authorList>
            <person name="Pottathil M."/>
            <person name="Lazazzera B.A."/>
        </authorList>
    </citation>
    <scope>FUNCTION IN QUORUM SENSING</scope>
    <scope>REVIEW</scope>
</reference>
<reference key="8">
    <citation type="journal article" date="2003" name="J. Bacteriol.">
        <title>Molecular analysis of Phr peptide processing in Bacillus subtilis.</title>
        <authorList>
            <person name="Stephenson S."/>
            <person name="Mueller C."/>
            <person name="Jiang M."/>
            <person name="Perego M."/>
        </authorList>
    </citation>
    <scope>CLEAVAGE SITE</scope>
    <scope>MUTAGENESIS OF THR-35</scope>
    <source>
        <strain>168 / JH642</strain>
    </source>
</reference>
<reference key="9">
    <citation type="journal article" date="2003" name="Mol. Microbiol.">
        <title>TPR-mediated interaction of RapC with ComA inhibits response regulator-DNA binding for competence development in Bacillus subtilis.</title>
        <authorList>
            <person name="Core L."/>
            <person name="Perego M."/>
        </authorList>
    </citation>
    <scope>FUNCTION</scope>
    <scope>INTERACTION WITH RAPC</scope>
    <source>
        <strain>168 / JH642</strain>
    </source>
</reference>
<reference key="10">
    <citation type="journal article" date="2006" name="J. Bacteriol.">
        <title>Modulation of the ComA-dependent quorum response in Bacillus subtilis by multiple Rap proteins and Phr peptides.</title>
        <authorList>
            <person name="Auchtung J.M."/>
            <person name="Lee C.A."/>
            <person name="Grossman A.D."/>
        </authorList>
    </citation>
    <scope>DISRUPTION PHENOTYPE</scope>
    <source>
        <strain>168 / JH642</strain>
    </source>
</reference>
<reference key="11">
    <citation type="journal article" date="2007" name="Cell Host Microbe">
        <title>The Bacillus subtilis quorum-sensing molecule CSF contributes to intestinal homeostasis via OCTN2, a host cell membrane transporter.</title>
        <authorList>
            <person name="Fujiya M."/>
            <person name="Musch M.W."/>
            <person name="Nakagawa Y."/>
            <person name="Hu S."/>
            <person name="Alverdy J."/>
            <person name="Kohgo Y."/>
            <person name="Schneewind O."/>
            <person name="Jabri B."/>
            <person name="Chang E.B."/>
        </authorList>
    </citation>
    <scope>FUNCTION IN HUMAN INTESTINAL HOMEOSTASIS</scope>
    <scope>SUBCELLULAR LOCATION</scope>
</reference>
<reference key="12">
    <citation type="journal article" date="2007" name="Mol. Microbiol.">
        <title>Identification of subtilisin, Epr and Vpr as enzymes that produce CSF, an extracellular signalling peptide of Bacillus subtilis.</title>
        <authorList>
            <person name="Lanigan-Gerdes S."/>
            <person name="Dooley A.N."/>
            <person name="Faull K.F."/>
            <person name="Lazazzera B.A."/>
        </authorList>
    </citation>
    <scope>PROTEOLYTIC PROCESSING</scope>
    <scope>CLEAVAGE SITE</scope>
    <scope>IDENTIFICATION BY MASS SPECTROMETRY</scope>
</reference>
<reference key="13">
    <citation type="journal article" date="2008" name="J. Bacteriol.">
        <title>CSF, a species-specific extracellular signaling peptide for communication among strains of Bacillus subtilis and Bacillus mojavensis.</title>
        <authorList>
            <person name="Pottathil M."/>
            <person name="Jung A."/>
            <person name="Lazazzera B.A."/>
        </authorList>
    </citation>
    <scope>FUNCTION AS A SPECIES-SPECIFIC SIGNALING MOLECULE</scope>
    <source>
        <strain>168 / JH642</strain>
    </source>
</reference>
<reference key="14">
    <citation type="journal article" date="2008" name="J. Bacteriol.">
        <title>Identification of residues important for cleavage of the extracellular signaling peptide CSF of Bacillus subtilis from its precursor protein.</title>
        <authorList>
            <person name="Lanigan-Gerdes S."/>
            <person name="Briceno G."/>
            <person name="Dooley A.N."/>
            <person name="Faull K.F."/>
            <person name="Lazazzera B.A."/>
        </authorList>
    </citation>
    <scope>PROTEOLYTIC PROCESSING</scope>
    <scope>CLEAVAGE SITE</scope>
    <scope>MUTAGENESIS OF ASP-31; PHE-32; HIS-33; VAL-34 AND THR-35</scope>
</reference>
<reference key="15">
    <citation type="journal article" date="2009" name="Microbiology">
        <title>Identification of genes required for different stages of dendritic swarming in Bacillus subtilis, with a novel role for phrC.</title>
        <authorList>
            <person name="Hamze K."/>
            <person name="Julkowska D."/>
            <person name="Autret S."/>
            <person name="Hinc K."/>
            <person name="Nagorska K."/>
            <person name="Sekowska A."/>
            <person name="Holland I.B."/>
            <person name="Seror S.J."/>
        </authorList>
    </citation>
    <scope>FUNCTION IN SWARMING STRAINS</scope>
    <scope>DISRUPTION PHENOTYPE</scope>
</reference>
<gene>
    <name evidence="13" type="primary">phrC</name>
    <name type="synonym">hprC</name>
    <name type="ordered locus">BSU03780</name>
</gene>
<evidence type="ECO:0000269" key="1">
    <source>
    </source>
</evidence>
<evidence type="ECO:0000269" key="2">
    <source>
    </source>
</evidence>
<evidence type="ECO:0000269" key="3">
    <source>
    </source>
</evidence>
<evidence type="ECO:0000269" key="4">
    <source>
    </source>
</evidence>
<evidence type="ECO:0000269" key="5">
    <source>
    </source>
</evidence>
<evidence type="ECO:0000269" key="6">
    <source>
    </source>
</evidence>
<evidence type="ECO:0000269" key="7">
    <source>
    </source>
</evidence>
<evidence type="ECO:0000269" key="8">
    <source>
    </source>
</evidence>
<evidence type="ECO:0000269" key="9">
    <source>
    </source>
</evidence>
<evidence type="ECO:0000269" key="10">
    <source>
    </source>
</evidence>
<evidence type="ECO:0000269" key="11">
    <source>
    </source>
</evidence>
<evidence type="ECO:0000269" key="12">
    <source>
    </source>
</evidence>
<evidence type="ECO:0000303" key="13">
    <source>
    </source>
</evidence>
<evidence type="ECO:0000305" key="14"/>
<evidence type="ECO:0000305" key="15">
    <source>
    </source>
</evidence>
<evidence type="ECO:0000305" key="16">
    <source>
    </source>
</evidence>
<dbReference type="EMBL" id="D50453">
    <property type="protein sequence ID" value="BAA09010.1"/>
    <property type="molecule type" value="Genomic_DNA"/>
</dbReference>
<dbReference type="EMBL" id="AL009126">
    <property type="protein sequence ID" value="CAB12186.1"/>
    <property type="molecule type" value="Genomic_DNA"/>
</dbReference>
<dbReference type="PIR" id="A69677">
    <property type="entry name" value="A69677"/>
</dbReference>
<dbReference type="RefSeq" id="NP_388260.1">
    <property type="nucleotide sequence ID" value="NC_000964.3"/>
</dbReference>
<dbReference type="RefSeq" id="WP_003224994.1">
    <property type="nucleotide sequence ID" value="NZ_OZ025638.1"/>
</dbReference>
<dbReference type="SMR" id="P94416"/>
<dbReference type="DIP" id="DIP-60168N"/>
<dbReference type="FunCoup" id="P94416">
    <property type="interactions" value="125"/>
</dbReference>
<dbReference type="IntAct" id="P94416">
    <property type="interactions" value="1"/>
</dbReference>
<dbReference type="STRING" id="224308.BSU03780"/>
<dbReference type="PaxDb" id="224308-BSU03780"/>
<dbReference type="EnsemblBacteria" id="CAB12186">
    <property type="protein sequence ID" value="CAB12186"/>
    <property type="gene ID" value="BSU_03780"/>
</dbReference>
<dbReference type="GeneID" id="11238275"/>
<dbReference type="GeneID" id="938281"/>
<dbReference type="KEGG" id="bsu:BSU03780"/>
<dbReference type="PATRIC" id="fig|224308.179.peg.398"/>
<dbReference type="InParanoid" id="P94416"/>
<dbReference type="BioCyc" id="BSUB:BSU03780-MONOMER"/>
<dbReference type="PRO" id="PR:P94416"/>
<dbReference type="Proteomes" id="UP000001570">
    <property type="component" value="Chromosome"/>
</dbReference>
<dbReference type="GO" id="GO:0005737">
    <property type="term" value="C:cytoplasm"/>
    <property type="evidence" value="ECO:0007669"/>
    <property type="project" value="UniProtKB-SubCell"/>
</dbReference>
<dbReference type="GO" id="GO:0005576">
    <property type="term" value="C:extracellular region"/>
    <property type="evidence" value="ECO:0007669"/>
    <property type="project" value="UniProtKB-SubCell"/>
</dbReference>
<dbReference type="GO" id="GO:0043657">
    <property type="term" value="C:host cell"/>
    <property type="evidence" value="ECO:0007669"/>
    <property type="project" value="UniProtKB-SubCell"/>
</dbReference>
<dbReference type="GO" id="GO:0030420">
    <property type="term" value="P:establishment of competence for transformation"/>
    <property type="evidence" value="ECO:0007669"/>
    <property type="project" value="UniProtKB-KW"/>
</dbReference>
<dbReference type="GO" id="GO:0009372">
    <property type="term" value="P:quorum sensing"/>
    <property type="evidence" value="ECO:0007669"/>
    <property type="project" value="UniProtKB-KW"/>
</dbReference>
<dbReference type="GO" id="GO:0030435">
    <property type="term" value="P:sporulation resulting in formation of a cellular spore"/>
    <property type="evidence" value="ECO:0007669"/>
    <property type="project" value="UniProtKB-KW"/>
</dbReference>
<dbReference type="InterPro" id="IPR025899">
    <property type="entry name" value="PhrC_PhrF"/>
</dbReference>
<dbReference type="Pfam" id="PF11131">
    <property type="entry name" value="PhrC_PhrF"/>
    <property type="match status" value="1"/>
</dbReference>
<sequence length="40" mass="4198">MKLKSKLFVICLAAAAIFTAAGVSANAEALDFHVTERGMT</sequence>
<protein>
    <recommendedName>
        <fullName evidence="13">Competence and sporulation stimulating factor</fullName>
        <shortName evidence="13">CSF</shortName>
    </recommendedName>
    <alternativeName>
        <fullName evidence="14">Extracellular signaling peptide CSF</fullName>
    </alternativeName>
    <alternativeName>
        <fullName evidence="14">RapC inhibitor</fullName>
    </alternativeName>
</protein>